<organism>
    <name type="scientific">Salmonella dublin (strain CT_02021853)</name>
    <dbReference type="NCBI Taxonomy" id="439851"/>
    <lineage>
        <taxon>Bacteria</taxon>
        <taxon>Pseudomonadati</taxon>
        <taxon>Pseudomonadota</taxon>
        <taxon>Gammaproteobacteria</taxon>
        <taxon>Enterobacterales</taxon>
        <taxon>Enterobacteriaceae</taxon>
        <taxon>Salmonella</taxon>
    </lineage>
</organism>
<dbReference type="EC" id="2.1.2.13" evidence="1"/>
<dbReference type="EC" id="1.1.1.305" evidence="1"/>
<dbReference type="EMBL" id="CP001144">
    <property type="protein sequence ID" value="ACH75760.1"/>
    <property type="molecule type" value="Genomic_DNA"/>
</dbReference>
<dbReference type="RefSeq" id="WP_000648758.1">
    <property type="nucleotide sequence ID" value="NC_011205.1"/>
</dbReference>
<dbReference type="SMR" id="B5FNT9"/>
<dbReference type="KEGG" id="sed:SeD_A2643"/>
<dbReference type="HOGENOM" id="CLU_007383_23_2_6"/>
<dbReference type="UniPathway" id="UPA00030"/>
<dbReference type="UniPathway" id="UPA00032">
    <property type="reaction ID" value="UER00492"/>
</dbReference>
<dbReference type="UniPathway" id="UPA00032">
    <property type="reaction ID" value="UER00494"/>
</dbReference>
<dbReference type="Proteomes" id="UP000008322">
    <property type="component" value="Chromosome"/>
</dbReference>
<dbReference type="GO" id="GO:0016020">
    <property type="term" value="C:membrane"/>
    <property type="evidence" value="ECO:0007669"/>
    <property type="project" value="GOC"/>
</dbReference>
<dbReference type="GO" id="GO:0016831">
    <property type="term" value="F:carboxy-lyase activity"/>
    <property type="evidence" value="ECO:0007669"/>
    <property type="project" value="InterPro"/>
</dbReference>
<dbReference type="GO" id="GO:0099619">
    <property type="term" value="F:UDP-4-amino-4-deoxy-L-arabinose formyltransferase activity"/>
    <property type="evidence" value="ECO:0007669"/>
    <property type="project" value="UniProtKB-EC"/>
</dbReference>
<dbReference type="GO" id="GO:0099618">
    <property type="term" value="F:UDP-glucuronate dehydrogenase activity"/>
    <property type="evidence" value="ECO:0007669"/>
    <property type="project" value="UniProtKB-EC"/>
</dbReference>
<dbReference type="GO" id="GO:0009245">
    <property type="term" value="P:lipid A biosynthetic process"/>
    <property type="evidence" value="ECO:0007669"/>
    <property type="project" value="UniProtKB-KW"/>
</dbReference>
<dbReference type="GO" id="GO:0009103">
    <property type="term" value="P:lipopolysaccharide biosynthetic process"/>
    <property type="evidence" value="ECO:0007669"/>
    <property type="project" value="UniProtKB-UniRule"/>
</dbReference>
<dbReference type="GO" id="GO:0046677">
    <property type="term" value="P:response to antibiotic"/>
    <property type="evidence" value="ECO:0007669"/>
    <property type="project" value="UniProtKB-KW"/>
</dbReference>
<dbReference type="CDD" id="cd08702">
    <property type="entry name" value="Arna_FMT_C"/>
    <property type="match status" value="1"/>
</dbReference>
<dbReference type="CDD" id="cd05257">
    <property type="entry name" value="Arna_like_SDR_e"/>
    <property type="match status" value="1"/>
</dbReference>
<dbReference type="FunFam" id="3.40.50.720:FF:000197">
    <property type="entry name" value="Bifunctional polymyxin resistance protein ArnA"/>
    <property type="match status" value="1"/>
</dbReference>
<dbReference type="Gene3D" id="3.40.50.12230">
    <property type="match status" value="1"/>
</dbReference>
<dbReference type="Gene3D" id="3.40.50.720">
    <property type="entry name" value="NAD(P)-binding Rossmann-like Domain"/>
    <property type="match status" value="1"/>
</dbReference>
<dbReference type="HAMAP" id="MF_01166">
    <property type="entry name" value="ArnA"/>
    <property type="match status" value="1"/>
</dbReference>
<dbReference type="InterPro" id="IPR045869">
    <property type="entry name" value="Arna-like_SDR_e"/>
</dbReference>
<dbReference type="InterPro" id="IPR021168">
    <property type="entry name" value="Bifun_polymyxin_resist_ArnA"/>
</dbReference>
<dbReference type="InterPro" id="IPR001509">
    <property type="entry name" value="Epimerase_deHydtase"/>
</dbReference>
<dbReference type="InterPro" id="IPR005793">
    <property type="entry name" value="Formyl_trans_C"/>
</dbReference>
<dbReference type="InterPro" id="IPR002376">
    <property type="entry name" value="Formyl_transf_N"/>
</dbReference>
<dbReference type="InterPro" id="IPR036477">
    <property type="entry name" value="Formyl_transf_N_sf"/>
</dbReference>
<dbReference type="InterPro" id="IPR011034">
    <property type="entry name" value="Formyl_transferase-like_C_sf"/>
</dbReference>
<dbReference type="InterPro" id="IPR050177">
    <property type="entry name" value="Lipid_A_modif_metabolic_enz"/>
</dbReference>
<dbReference type="InterPro" id="IPR036291">
    <property type="entry name" value="NAD(P)-bd_dom_sf"/>
</dbReference>
<dbReference type="NCBIfam" id="NF005414">
    <property type="entry name" value="PRK06988.1"/>
    <property type="match status" value="1"/>
</dbReference>
<dbReference type="NCBIfam" id="NF005998">
    <property type="entry name" value="PRK08125.1"/>
    <property type="match status" value="1"/>
</dbReference>
<dbReference type="NCBIfam" id="NF008872">
    <property type="entry name" value="PRK11908.1"/>
    <property type="match status" value="1"/>
</dbReference>
<dbReference type="PANTHER" id="PTHR43245">
    <property type="entry name" value="BIFUNCTIONAL POLYMYXIN RESISTANCE PROTEIN ARNA"/>
    <property type="match status" value="1"/>
</dbReference>
<dbReference type="PANTHER" id="PTHR43245:SF13">
    <property type="entry name" value="UDP-D-APIOSE_UDP-D-XYLOSE SYNTHASE 2"/>
    <property type="match status" value="1"/>
</dbReference>
<dbReference type="Pfam" id="PF01370">
    <property type="entry name" value="Epimerase"/>
    <property type="match status" value="1"/>
</dbReference>
<dbReference type="Pfam" id="PF02911">
    <property type="entry name" value="Formyl_trans_C"/>
    <property type="match status" value="1"/>
</dbReference>
<dbReference type="Pfam" id="PF00551">
    <property type="entry name" value="Formyl_trans_N"/>
    <property type="match status" value="1"/>
</dbReference>
<dbReference type="PIRSF" id="PIRSF036506">
    <property type="entry name" value="Bifun_polymyxin_resist_ArnA"/>
    <property type="match status" value="1"/>
</dbReference>
<dbReference type="SUPFAM" id="SSF50486">
    <property type="entry name" value="FMT C-terminal domain-like"/>
    <property type="match status" value="1"/>
</dbReference>
<dbReference type="SUPFAM" id="SSF53328">
    <property type="entry name" value="Formyltransferase"/>
    <property type="match status" value="1"/>
</dbReference>
<dbReference type="SUPFAM" id="SSF51735">
    <property type="entry name" value="NAD(P)-binding Rossmann-fold domains"/>
    <property type="match status" value="1"/>
</dbReference>
<evidence type="ECO:0000255" key="1">
    <source>
        <dbReference type="HAMAP-Rule" id="MF_01166"/>
    </source>
</evidence>
<feature type="chain" id="PRO_1000137946" description="Bifunctional polymyxin resistance protein ArnA">
    <location>
        <begin position="1"/>
        <end position="660"/>
    </location>
</feature>
<feature type="region of interest" description="Formyltransferase ArnAFT">
    <location>
        <begin position="1"/>
        <end position="304"/>
    </location>
</feature>
<feature type="region of interest" description="Dehydrogenase ArnADH">
    <location>
        <begin position="314"/>
        <end position="660"/>
    </location>
</feature>
<feature type="active site" description="Proton donor; for formyltransferase activity" evidence="1">
    <location>
        <position position="104"/>
    </location>
</feature>
<feature type="active site" description="Proton acceptor; for decarboxylase activity" evidence="1">
    <location>
        <position position="434"/>
    </location>
</feature>
<feature type="active site" description="Proton donor; for decarboxylase activity" evidence="1">
    <location>
        <position position="619"/>
    </location>
</feature>
<feature type="binding site" evidence="1">
    <location>
        <position position="114"/>
    </location>
    <ligand>
        <name>(6R)-10-formyltetrahydrofolate</name>
        <dbReference type="ChEBI" id="CHEBI:195366"/>
    </ligand>
</feature>
<feature type="binding site" evidence="1">
    <location>
        <begin position="136"/>
        <end position="140"/>
    </location>
    <ligand>
        <name>(6R)-10-formyltetrahydrofolate</name>
        <dbReference type="ChEBI" id="CHEBI:195366"/>
    </ligand>
</feature>
<feature type="binding site" evidence="1">
    <location>
        <position position="347"/>
    </location>
    <ligand>
        <name>NAD(+)</name>
        <dbReference type="ChEBI" id="CHEBI:57540"/>
    </ligand>
</feature>
<feature type="binding site" evidence="1">
    <location>
        <begin position="368"/>
        <end position="369"/>
    </location>
    <ligand>
        <name>NAD(+)</name>
        <dbReference type="ChEBI" id="CHEBI:57540"/>
    </ligand>
</feature>
<feature type="binding site" evidence="1">
    <location>
        <position position="393"/>
    </location>
    <ligand>
        <name>UDP-alpha-D-glucuronate</name>
        <dbReference type="ChEBI" id="CHEBI:58052"/>
    </ligand>
</feature>
<feature type="binding site" evidence="1">
    <location>
        <position position="398"/>
    </location>
    <ligand>
        <name>UDP-alpha-D-glucuronate</name>
        <dbReference type="ChEBI" id="CHEBI:58052"/>
    </ligand>
</feature>
<feature type="binding site" evidence="1">
    <location>
        <begin position="432"/>
        <end position="433"/>
    </location>
    <ligand>
        <name>UDP-alpha-D-glucuronate</name>
        <dbReference type="ChEBI" id="CHEBI:58052"/>
    </ligand>
</feature>
<feature type="binding site" evidence="1">
    <location>
        <position position="460"/>
    </location>
    <ligand>
        <name>UDP-alpha-D-glucuronate</name>
        <dbReference type="ChEBI" id="CHEBI:58052"/>
    </ligand>
</feature>
<feature type="binding site" evidence="1">
    <location>
        <position position="492"/>
    </location>
    <ligand>
        <name>UDP-alpha-D-glucuronate</name>
        <dbReference type="ChEBI" id="CHEBI:58052"/>
    </ligand>
</feature>
<feature type="binding site" evidence="1">
    <location>
        <begin position="526"/>
        <end position="535"/>
    </location>
    <ligand>
        <name>UDP-alpha-D-glucuronate</name>
        <dbReference type="ChEBI" id="CHEBI:58052"/>
    </ligand>
</feature>
<feature type="binding site" evidence="1">
    <location>
        <position position="613"/>
    </location>
    <ligand>
        <name>UDP-alpha-D-glucuronate</name>
        <dbReference type="ChEBI" id="CHEBI:58052"/>
    </ligand>
</feature>
<feature type="site" description="Transition state stabilizer" evidence="1">
    <location>
        <position position="102"/>
    </location>
</feature>
<feature type="site" description="Raises pKa of active site His" evidence="1">
    <location>
        <position position="140"/>
    </location>
</feature>
<comment type="function">
    <text evidence="1">Bifunctional enzyme that catalyzes the oxidative decarboxylation of UDP-glucuronic acid (UDP-GlcUA) to UDP-4-keto-arabinose (UDP-Ara4O) and the addition of a formyl group to UDP-4-amino-4-deoxy-L-arabinose (UDP-L-Ara4N) to form UDP-L-4-formamido-arabinose (UDP-L-Ara4FN). The modified arabinose is attached to lipid A and is required for resistance to polymyxin and cationic antimicrobial peptides.</text>
</comment>
<comment type="catalytic activity">
    <reaction evidence="1">
        <text>UDP-alpha-D-glucuronate + NAD(+) = UDP-beta-L-threo-pentopyranos-4-ulose + CO2 + NADH</text>
        <dbReference type="Rhea" id="RHEA:24702"/>
        <dbReference type="ChEBI" id="CHEBI:16526"/>
        <dbReference type="ChEBI" id="CHEBI:57540"/>
        <dbReference type="ChEBI" id="CHEBI:57945"/>
        <dbReference type="ChEBI" id="CHEBI:58052"/>
        <dbReference type="ChEBI" id="CHEBI:58710"/>
        <dbReference type="EC" id="1.1.1.305"/>
    </reaction>
</comment>
<comment type="catalytic activity">
    <reaction evidence="1">
        <text>UDP-4-amino-4-deoxy-beta-L-arabinose + (6R)-10-formyltetrahydrofolate = UDP-4-deoxy-4-formamido-beta-L-arabinose + (6S)-5,6,7,8-tetrahydrofolate + H(+)</text>
        <dbReference type="Rhea" id="RHEA:24706"/>
        <dbReference type="ChEBI" id="CHEBI:15378"/>
        <dbReference type="ChEBI" id="CHEBI:57453"/>
        <dbReference type="ChEBI" id="CHEBI:58708"/>
        <dbReference type="ChEBI" id="CHEBI:58709"/>
        <dbReference type="ChEBI" id="CHEBI:195366"/>
        <dbReference type="EC" id="2.1.2.13"/>
    </reaction>
</comment>
<comment type="pathway">
    <text evidence="1">Nucleotide-sugar biosynthesis; UDP-4-deoxy-4-formamido-beta-L-arabinose biosynthesis; UDP-4-deoxy-4-formamido-beta-L-arabinose from UDP-alpha-D-glucuronate: step 1/3.</text>
</comment>
<comment type="pathway">
    <text evidence="1">Nucleotide-sugar biosynthesis; UDP-4-deoxy-4-formamido-beta-L-arabinose biosynthesis; UDP-4-deoxy-4-formamido-beta-L-arabinose from UDP-alpha-D-glucuronate: step 3/3.</text>
</comment>
<comment type="pathway">
    <text evidence="1">Bacterial outer membrane biogenesis; lipopolysaccharide biosynthesis.</text>
</comment>
<comment type="subunit">
    <text evidence="1">Homohexamer, formed by a dimer of trimers.</text>
</comment>
<comment type="similarity">
    <text evidence="1">In the N-terminal section; belongs to the Fmt family. UDP-L-Ara4N formyltransferase subfamily.</text>
</comment>
<comment type="similarity">
    <text evidence="1">In the C-terminal section; belongs to the NAD(P)-dependent epimerase/dehydratase family. UDP-glucuronic acid decarboxylase subfamily.</text>
</comment>
<name>ARNA_SALDC</name>
<accession>B5FNT9</accession>
<sequence length="660" mass="73515">MKAVIFAYHDMGCQGVQAVLDAGYEIAAIFTHADNPAENTFFGSVSRLAAELGIPVYAPDNVNHPIWVDRIAEFAPDIIFSFYYRNLLSEEILHLAPAGAFNLHGSLLPAYRGRAPLNWVLVNGESETGVTLHRMVKRADAGEIVASQRVAIAQDDVALTLHHKLCQAARQLLNSILPTMKCGDIPSVPQRESDATYYGRRRPEDGLIDWHKPVSTVHNLVRAVAAPWPGAFSYNGSQKFTIWSSRICPDAQGALPGSVISVSPLRVACADGALEIITGQAGDGITVQGSQLAQTLGLVAGARLNRPPATSGKRRIRVLILGVNGFIGNHLTERLLNEENYEVYGMDIGSNAISRFLLHPRFHFVEGDISIHSEWIEYHVKKCDVVLPLVAIATPIEYTRNPLRVFELDFEENLRIIRYCVKYRKRVVFPSTSEVYGMCTDASFDEDKSNLIVGPVNKPRWIYSVSKQLLDRVIWAYGEKEGLRFTLFRPFNWMGPRLDSLNAARIGSSRAITQLILNLVEGTPIKLIDGGQQKRCFTDIRDGIEALFRIIVNEGDRCDGKIINIGNPDNEASIQELATLLLDSFDKHPLRCHFPPFAGFQVVESRSYYGKGYQDVAHRKPSIDNARRCLGWEPSIAMRDTVEETLDFFLRSVDVAERAS</sequence>
<keyword id="KW-0046">Antibiotic resistance</keyword>
<keyword id="KW-0441">Lipid A biosynthesis</keyword>
<keyword id="KW-0444">Lipid biosynthesis</keyword>
<keyword id="KW-0443">Lipid metabolism</keyword>
<keyword id="KW-0448">Lipopolysaccharide biosynthesis</keyword>
<keyword id="KW-0511">Multifunctional enzyme</keyword>
<keyword id="KW-0520">NAD</keyword>
<keyword id="KW-0560">Oxidoreductase</keyword>
<keyword id="KW-0808">Transferase</keyword>
<reference key="1">
    <citation type="journal article" date="2011" name="J. Bacteriol.">
        <title>Comparative genomics of 28 Salmonella enterica isolates: evidence for CRISPR-mediated adaptive sublineage evolution.</title>
        <authorList>
            <person name="Fricke W.F."/>
            <person name="Mammel M.K."/>
            <person name="McDermott P.F."/>
            <person name="Tartera C."/>
            <person name="White D.G."/>
            <person name="Leclerc J.E."/>
            <person name="Ravel J."/>
            <person name="Cebula T.A."/>
        </authorList>
    </citation>
    <scope>NUCLEOTIDE SEQUENCE [LARGE SCALE GENOMIC DNA]</scope>
    <source>
        <strain>CT_02021853</strain>
    </source>
</reference>
<gene>
    <name evidence="1" type="primary">arnA</name>
    <name type="ordered locus">SeD_A2643</name>
</gene>
<protein>
    <recommendedName>
        <fullName evidence="1">Bifunctional polymyxin resistance protein ArnA</fullName>
    </recommendedName>
    <domain>
        <recommendedName>
            <fullName evidence="1">UDP-4-amino-4-deoxy-L-arabinose formyltransferase</fullName>
            <ecNumber evidence="1">2.1.2.13</ecNumber>
        </recommendedName>
        <alternativeName>
            <fullName evidence="1">ArnAFT</fullName>
        </alternativeName>
        <alternativeName>
            <fullName evidence="1">UDP-L-Ara4N formyltransferase</fullName>
        </alternativeName>
    </domain>
    <domain>
        <recommendedName>
            <fullName evidence="1">UDP-glucuronic acid oxidase, UDP-4-keto-hexauronic acid decarboxylating</fullName>
            <ecNumber evidence="1">1.1.1.305</ecNumber>
        </recommendedName>
        <alternativeName>
            <fullName evidence="1">ArnADH</fullName>
        </alternativeName>
        <alternativeName>
            <fullName evidence="1">UDP-GlcUA decarboxylase</fullName>
        </alternativeName>
        <alternativeName>
            <fullName evidence="1">UDP-glucuronic acid dehydrogenase</fullName>
        </alternativeName>
    </domain>
</protein>
<proteinExistence type="inferred from homology"/>